<organism>
    <name type="scientific">Xenopus laevis</name>
    <name type="common">African clawed frog</name>
    <dbReference type="NCBI Taxonomy" id="8355"/>
    <lineage>
        <taxon>Eukaryota</taxon>
        <taxon>Metazoa</taxon>
        <taxon>Chordata</taxon>
        <taxon>Craniata</taxon>
        <taxon>Vertebrata</taxon>
        <taxon>Euteleostomi</taxon>
        <taxon>Amphibia</taxon>
        <taxon>Batrachia</taxon>
        <taxon>Anura</taxon>
        <taxon>Pipoidea</taxon>
        <taxon>Pipidae</taxon>
        <taxon>Xenopodinae</taxon>
        <taxon>Xenopus</taxon>
        <taxon>Xenopus</taxon>
    </lineage>
</organism>
<comment type="function">
    <text evidence="2">Oxidoreductase that catalyzes the last step in proline biosynthesis, which corresponds to the reduction of pyrroline-5-carboxylate (P5C) to L-proline using NAD(P)H. Proline is synthesized from either glutamate or ornithine; both are converted to P5C, and then to proline via pyrroline-5-carboxylate reductases (PYCRs). PYCR3 is exclusively linked to the biosynthesis of proline from ornithine.</text>
</comment>
<comment type="catalytic activity">
    <reaction evidence="2">
        <text>L-proline + NADP(+) = (S)-1-pyrroline-5-carboxylate + NADPH + 2 H(+)</text>
        <dbReference type="Rhea" id="RHEA:14109"/>
        <dbReference type="ChEBI" id="CHEBI:15378"/>
        <dbReference type="ChEBI" id="CHEBI:17388"/>
        <dbReference type="ChEBI" id="CHEBI:57783"/>
        <dbReference type="ChEBI" id="CHEBI:58349"/>
        <dbReference type="ChEBI" id="CHEBI:60039"/>
        <dbReference type="EC" id="1.5.1.2"/>
    </reaction>
    <physiologicalReaction direction="right-to-left" evidence="2">
        <dbReference type="Rhea" id="RHEA:14111"/>
    </physiologicalReaction>
</comment>
<comment type="catalytic activity">
    <reaction evidence="2">
        <text>L-proline + NAD(+) = (S)-1-pyrroline-5-carboxylate + NADH + 2 H(+)</text>
        <dbReference type="Rhea" id="RHEA:14105"/>
        <dbReference type="ChEBI" id="CHEBI:15378"/>
        <dbReference type="ChEBI" id="CHEBI:17388"/>
        <dbReference type="ChEBI" id="CHEBI:57540"/>
        <dbReference type="ChEBI" id="CHEBI:57945"/>
        <dbReference type="ChEBI" id="CHEBI:60039"/>
        <dbReference type="EC" id="1.5.1.2"/>
    </reaction>
    <physiologicalReaction direction="right-to-left" evidence="2">
        <dbReference type="Rhea" id="RHEA:14107"/>
    </physiologicalReaction>
</comment>
<comment type="pathway">
    <text evidence="2">Amino-acid biosynthesis; L-proline biosynthesis; L-proline from L-glutamate 5-semialdehyde: step 1/1.</text>
</comment>
<comment type="subunit">
    <text evidence="1">Homodecamer; composed of 5 homodimers.</text>
</comment>
<comment type="subcellular location">
    <subcellularLocation>
        <location evidence="2">Cytoplasm</location>
    </subcellularLocation>
</comment>
<comment type="similarity">
    <text evidence="3">Belongs to the pyrroline-5-carboxylate reductase family.</text>
</comment>
<dbReference type="EC" id="1.5.1.2" evidence="2"/>
<dbReference type="EMBL" id="BC129663">
    <property type="protein sequence ID" value="AAI29664.1"/>
    <property type="molecule type" value="mRNA"/>
</dbReference>
<dbReference type="SMR" id="A1L2Q8"/>
<dbReference type="AGR" id="Xenbase:XB-GENE-6255865"/>
<dbReference type="Xenbase" id="XB-GENE-6255865">
    <property type="gene designation" value="pycr3.L"/>
</dbReference>
<dbReference type="UniPathway" id="UPA00098">
    <property type="reaction ID" value="UER00361"/>
</dbReference>
<dbReference type="Proteomes" id="UP000186698">
    <property type="component" value="Unplaced"/>
</dbReference>
<dbReference type="GO" id="GO:0005829">
    <property type="term" value="C:cytosol"/>
    <property type="evidence" value="ECO:0000250"/>
    <property type="project" value="UniProtKB"/>
</dbReference>
<dbReference type="GO" id="GO:0004735">
    <property type="term" value="F:pyrroline-5-carboxylate reductase activity"/>
    <property type="evidence" value="ECO:0000250"/>
    <property type="project" value="UniProtKB"/>
</dbReference>
<dbReference type="GO" id="GO:0055129">
    <property type="term" value="P:L-proline biosynthetic process"/>
    <property type="evidence" value="ECO:0000250"/>
    <property type="project" value="UniProtKB"/>
</dbReference>
<dbReference type="FunFam" id="3.40.50.720:FF:000367">
    <property type="entry name" value="Pyrroline-5-carboxylate reductase"/>
    <property type="match status" value="1"/>
</dbReference>
<dbReference type="FunFam" id="1.10.3730.10:FF:000003">
    <property type="entry name" value="Pyrroline-5-carboxylate reductase 1, mitochondrial"/>
    <property type="match status" value="1"/>
</dbReference>
<dbReference type="Gene3D" id="3.40.50.720">
    <property type="entry name" value="NAD(P)-binding Rossmann-like Domain"/>
    <property type="match status" value="1"/>
</dbReference>
<dbReference type="Gene3D" id="1.10.3730.10">
    <property type="entry name" value="ProC C-terminal domain-like"/>
    <property type="match status" value="1"/>
</dbReference>
<dbReference type="HAMAP" id="MF_01925">
    <property type="entry name" value="P5C_reductase"/>
    <property type="match status" value="1"/>
</dbReference>
<dbReference type="InterPro" id="IPR008927">
    <property type="entry name" value="6-PGluconate_DH-like_C_sf"/>
</dbReference>
<dbReference type="InterPro" id="IPR036291">
    <property type="entry name" value="NAD(P)-bd_dom_sf"/>
</dbReference>
<dbReference type="InterPro" id="IPR028939">
    <property type="entry name" value="P5C_Rdtase_cat_N"/>
</dbReference>
<dbReference type="InterPro" id="IPR053790">
    <property type="entry name" value="P5CR-like_CS"/>
</dbReference>
<dbReference type="InterPro" id="IPR029036">
    <property type="entry name" value="P5CR_dimer"/>
</dbReference>
<dbReference type="InterPro" id="IPR000304">
    <property type="entry name" value="Pyrroline-COOH_reductase"/>
</dbReference>
<dbReference type="NCBIfam" id="TIGR00112">
    <property type="entry name" value="proC"/>
    <property type="match status" value="1"/>
</dbReference>
<dbReference type="PANTHER" id="PTHR11645">
    <property type="entry name" value="PYRROLINE-5-CARBOXYLATE REDUCTASE"/>
    <property type="match status" value="1"/>
</dbReference>
<dbReference type="PANTHER" id="PTHR11645:SF0">
    <property type="entry name" value="PYRROLINE-5-CARBOXYLATE REDUCTASE 3"/>
    <property type="match status" value="1"/>
</dbReference>
<dbReference type="Pfam" id="PF03807">
    <property type="entry name" value="F420_oxidored"/>
    <property type="match status" value="1"/>
</dbReference>
<dbReference type="Pfam" id="PF14748">
    <property type="entry name" value="P5CR_dimer"/>
    <property type="match status" value="1"/>
</dbReference>
<dbReference type="PIRSF" id="PIRSF000193">
    <property type="entry name" value="Pyrrol-5-carb_rd"/>
    <property type="match status" value="1"/>
</dbReference>
<dbReference type="SUPFAM" id="SSF48179">
    <property type="entry name" value="6-phosphogluconate dehydrogenase C-terminal domain-like"/>
    <property type="match status" value="1"/>
</dbReference>
<dbReference type="SUPFAM" id="SSF51735">
    <property type="entry name" value="NAD(P)-binding Rossmann-fold domains"/>
    <property type="match status" value="1"/>
</dbReference>
<dbReference type="PROSITE" id="PS00521">
    <property type="entry name" value="P5CR"/>
    <property type="match status" value="1"/>
</dbReference>
<accession>A1L2Q8</accession>
<keyword id="KW-0028">Amino-acid biosynthesis</keyword>
<keyword id="KW-0963">Cytoplasm</keyword>
<keyword id="KW-0521">NADP</keyword>
<keyword id="KW-0560">Oxidoreductase</keyword>
<keyword id="KW-0641">Proline biosynthesis</keyword>
<keyword id="KW-1185">Reference proteome</keyword>
<evidence type="ECO:0000250" key="1">
    <source>
        <dbReference type="UniProtKB" id="P32322"/>
    </source>
</evidence>
<evidence type="ECO:0000250" key="2">
    <source>
        <dbReference type="UniProtKB" id="Q53H96"/>
    </source>
</evidence>
<evidence type="ECO:0000305" key="3"/>
<proteinExistence type="evidence at transcript level"/>
<protein>
    <recommendedName>
        <fullName evidence="2">Pyrroline-5-carboxylate reductase 3</fullName>
        <shortName>P5C reductase 3</shortName>
        <shortName>P5CR 3</shortName>
        <ecNumber evidence="2">1.5.1.2</ecNumber>
    </recommendedName>
    <alternativeName>
        <fullName>Pyrroline-5-carboxylate reductase-like protein</fullName>
    </alternativeName>
</protein>
<sequence length="274" mass="28875">MAASPRVSLPVGCIGAGRMAQGILEGILHKGEITPQNVMVSAPTDRNLEKLKARGCCTSHDNRSVVSNCRVVFLATKPHIIPSVLQEIYPKVTADHLIISMAAGVTLETLEKNLPPGSKVIRMMPNLPCVLQEGAIVFSRGRCAGEVEADVFESLVRTCGLCVEVPQSCIDIHTGVSGSGVAYVYTFAEALADGAVKMGMPSALARQIVAQTLLGAGKMLLQSEEHPASLRADVCTPGGTTIFGLHELEKGGLRAAVMNAVEAATTRAMDMGRK</sequence>
<name>P5CR3_XENLA</name>
<feature type="chain" id="PRO_0000324566" description="Pyrroline-5-carboxylate reductase 3">
    <location>
        <begin position="1"/>
        <end position="274"/>
    </location>
</feature>
<gene>
    <name evidence="2" type="primary">pycr3</name>
    <name type="synonym">pycrl</name>
</gene>
<reference key="1">
    <citation type="submission" date="2006-12" db="EMBL/GenBank/DDBJ databases">
        <authorList>
            <consortium name="NIH - Xenopus Gene Collection (XGC) project"/>
        </authorList>
    </citation>
    <scope>NUCLEOTIDE SEQUENCE [LARGE SCALE MRNA] OF 2-274</scope>
    <source>
        <tissue>Olfactory bulb</tissue>
    </source>
</reference>